<comment type="function">
    <text evidence="1">Catalyzes oxygen-dependent 5-hydroxyuridine (ho5U) modification at position 34 in tRNAs.</text>
</comment>
<comment type="catalytic activity">
    <reaction evidence="1">
        <text>uridine(34) in tRNA + AH2 + O2 = 5-hydroxyuridine(34) in tRNA + A + H2O</text>
        <dbReference type="Rhea" id="RHEA:64224"/>
        <dbReference type="Rhea" id="RHEA-COMP:11727"/>
        <dbReference type="Rhea" id="RHEA-COMP:13381"/>
        <dbReference type="ChEBI" id="CHEBI:13193"/>
        <dbReference type="ChEBI" id="CHEBI:15377"/>
        <dbReference type="ChEBI" id="CHEBI:15379"/>
        <dbReference type="ChEBI" id="CHEBI:17499"/>
        <dbReference type="ChEBI" id="CHEBI:65315"/>
        <dbReference type="ChEBI" id="CHEBI:136877"/>
    </reaction>
</comment>
<comment type="similarity">
    <text evidence="1">Belongs to the TrhO family.</text>
</comment>
<protein>
    <recommendedName>
        <fullName evidence="1">tRNA uridine(34) hydroxylase</fullName>
        <ecNumber evidence="1">1.14.-.-</ecNumber>
    </recommendedName>
    <alternativeName>
        <fullName evidence="1">tRNA hydroxylation protein O</fullName>
    </alternativeName>
</protein>
<organism>
    <name type="scientific">Salmonella paratyphi A (strain AKU_12601)</name>
    <dbReference type="NCBI Taxonomy" id="554290"/>
    <lineage>
        <taxon>Bacteria</taxon>
        <taxon>Pseudomonadati</taxon>
        <taxon>Pseudomonadota</taxon>
        <taxon>Gammaproteobacteria</taxon>
        <taxon>Enterobacterales</taxon>
        <taxon>Enterobacteriaceae</taxon>
        <taxon>Salmonella</taxon>
    </lineage>
</organism>
<name>TRHO_SALPK</name>
<proteinExistence type="inferred from homology"/>
<gene>
    <name evidence="1" type="primary">trhO</name>
    <name type="synonym">yceA</name>
    <name type="ordered locus">SSPA1576</name>
</gene>
<reference key="1">
    <citation type="journal article" date="2009" name="BMC Genomics">
        <title>Pseudogene accumulation in the evolutionary histories of Salmonella enterica serovars Paratyphi A and Typhi.</title>
        <authorList>
            <person name="Holt K.E."/>
            <person name="Thomson N.R."/>
            <person name="Wain J."/>
            <person name="Langridge G.C."/>
            <person name="Hasan R."/>
            <person name="Bhutta Z.A."/>
            <person name="Quail M.A."/>
            <person name="Norbertczak H."/>
            <person name="Walker D."/>
            <person name="Simmonds M."/>
            <person name="White B."/>
            <person name="Bason N."/>
            <person name="Mungall K."/>
            <person name="Dougan G."/>
            <person name="Parkhill J."/>
        </authorList>
    </citation>
    <scope>NUCLEOTIDE SEQUENCE [LARGE SCALE GENOMIC DNA]</scope>
    <source>
        <strain>AKU_12601</strain>
    </source>
</reference>
<keyword id="KW-0560">Oxidoreductase</keyword>
<keyword id="KW-0819">tRNA processing</keyword>
<feature type="chain" id="PRO_1000200377" description="tRNA uridine(34) hydroxylase">
    <location>
        <begin position="1"/>
        <end position="350"/>
    </location>
</feature>
<feature type="domain" description="Rhodanese" evidence="1">
    <location>
        <begin position="146"/>
        <end position="240"/>
    </location>
</feature>
<feature type="region of interest" description="Disordered" evidence="2">
    <location>
        <begin position="319"/>
        <end position="350"/>
    </location>
</feature>
<feature type="compositionally biased region" description="Basic and acidic residues" evidence="2">
    <location>
        <begin position="319"/>
        <end position="328"/>
    </location>
</feature>
<feature type="active site" description="Cysteine persulfide intermediate" evidence="1">
    <location>
        <position position="200"/>
    </location>
</feature>
<accession>B5BBD3</accession>
<sequence length="350" mass="39921">MPVLHNRISNDELKAKMLAESEPRTTISFYKYFTIASPQQTRDALYQVFTALDVFGRVYLAHEGINAQISVPQSKVETFRQQLYTFDPALDGLRLNIALEDDGKSFWVLRMKVRDRIVADGIDDPTFDASNVGDYLKAADVNAMLDDPDAVFIDMRNHYEYEVGHFENALEIPADTFREQLPKAVEMLREHADKKIVMYCTGGIRCEKASAWMKHNGFNKVWHIEGGIIEYARRAREQGLPVRFIGKNFVFDERMGERISDEVIAHCHQCGAPCDSHTNCKNDGCHLLFIQCPQCASKFNGCCSEQCCEELALPEEEQRRRRAGRENGNKIFNKSRGRLNSKLSIPDPAE</sequence>
<dbReference type="EC" id="1.14.-.-" evidence="1"/>
<dbReference type="EMBL" id="FM200053">
    <property type="protein sequence ID" value="CAR59762.1"/>
    <property type="molecule type" value="Genomic_DNA"/>
</dbReference>
<dbReference type="RefSeq" id="WP_001144637.1">
    <property type="nucleotide sequence ID" value="NC_011147.1"/>
</dbReference>
<dbReference type="SMR" id="B5BBD3"/>
<dbReference type="KEGG" id="sek:SSPA1576"/>
<dbReference type="HOGENOM" id="CLU_038878_1_1_6"/>
<dbReference type="Proteomes" id="UP000001869">
    <property type="component" value="Chromosome"/>
</dbReference>
<dbReference type="GO" id="GO:0016705">
    <property type="term" value="F:oxidoreductase activity, acting on paired donors, with incorporation or reduction of molecular oxygen"/>
    <property type="evidence" value="ECO:0007669"/>
    <property type="project" value="UniProtKB-UniRule"/>
</dbReference>
<dbReference type="GO" id="GO:0006400">
    <property type="term" value="P:tRNA modification"/>
    <property type="evidence" value="ECO:0007669"/>
    <property type="project" value="UniProtKB-UniRule"/>
</dbReference>
<dbReference type="CDD" id="cd01518">
    <property type="entry name" value="RHOD_YceA"/>
    <property type="match status" value="1"/>
</dbReference>
<dbReference type="Gene3D" id="3.30.70.100">
    <property type="match status" value="1"/>
</dbReference>
<dbReference type="Gene3D" id="3.40.250.10">
    <property type="entry name" value="Rhodanese-like domain"/>
    <property type="match status" value="1"/>
</dbReference>
<dbReference type="HAMAP" id="MF_00469">
    <property type="entry name" value="TrhO"/>
    <property type="match status" value="1"/>
</dbReference>
<dbReference type="InterPro" id="IPR001763">
    <property type="entry name" value="Rhodanese-like_dom"/>
</dbReference>
<dbReference type="InterPro" id="IPR036873">
    <property type="entry name" value="Rhodanese-like_dom_sf"/>
</dbReference>
<dbReference type="InterPro" id="IPR022111">
    <property type="entry name" value="Rhodanese_C"/>
</dbReference>
<dbReference type="InterPro" id="IPR020936">
    <property type="entry name" value="TrhO"/>
</dbReference>
<dbReference type="InterPro" id="IPR040503">
    <property type="entry name" value="TRHO_N"/>
</dbReference>
<dbReference type="NCBIfam" id="NF001133">
    <property type="entry name" value="PRK00142.1-1"/>
    <property type="match status" value="1"/>
</dbReference>
<dbReference type="PANTHER" id="PTHR43846:SF1">
    <property type="entry name" value="TRNA URIDINE(34) HYDROXYLASE"/>
    <property type="match status" value="1"/>
</dbReference>
<dbReference type="PANTHER" id="PTHR43846">
    <property type="entry name" value="UPF0176 PROTEIN YCEA"/>
    <property type="match status" value="1"/>
</dbReference>
<dbReference type="Pfam" id="PF00581">
    <property type="entry name" value="Rhodanese"/>
    <property type="match status" value="1"/>
</dbReference>
<dbReference type="Pfam" id="PF12368">
    <property type="entry name" value="Rhodanese_C"/>
    <property type="match status" value="1"/>
</dbReference>
<dbReference type="Pfam" id="PF17773">
    <property type="entry name" value="UPF0176_N"/>
    <property type="match status" value="1"/>
</dbReference>
<dbReference type="SMART" id="SM00450">
    <property type="entry name" value="RHOD"/>
    <property type="match status" value="1"/>
</dbReference>
<dbReference type="SUPFAM" id="SSF52821">
    <property type="entry name" value="Rhodanese/Cell cycle control phosphatase"/>
    <property type="match status" value="1"/>
</dbReference>
<dbReference type="PROSITE" id="PS50206">
    <property type="entry name" value="RHODANESE_3"/>
    <property type="match status" value="1"/>
</dbReference>
<evidence type="ECO:0000255" key="1">
    <source>
        <dbReference type="HAMAP-Rule" id="MF_00469"/>
    </source>
</evidence>
<evidence type="ECO:0000256" key="2">
    <source>
        <dbReference type="SAM" id="MobiDB-lite"/>
    </source>
</evidence>